<geneLocation type="chloroplast"/>
<protein>
    <recommendedName>
        <fullName evidence="1">ATP-dependent Clp protease proteolytic subunit</fullName>
        <ecNumber evidence="1">3.4.21.92</ecNumber>
    </recommendedName>
    <alternativeName>
        <fullName evidence="1">Endopeptidase Clp</fullName>
    </alternativeName>
</protein>
<organism>
    <name type="scientific">Panax ginseng</name>
    <name type="common">Korean ginseng</name>
    <dbReference type="NCBI Taxonomy" id="4054"/>
    <lineage>
        <taxon>Eukaryota</taxon>
        <taxon>Viridiplantae</taxon>
        <taxon>Streptophyta</taxon>
        <taxon>Embryophyta</taxon>
        <taxon>Tracheophyta</taxon>
        <taxon>Spermatophyta</taxon>
        <taxon>Magnoliopsida</taxon>
        <taxon>eudicotyledons</taxon>
        <taxon>Gunneridae</taxon>
        <taxon>Pentapetalae</taxon>
        <taxon>asterids</taxon>
        <taxon>campanulids</taxon>
        <taxon>Apiales</taxon>
        <taxon>Araliaceae</taxon>
        <taxon>Panax</taxon>
    </lineage>
</organism>
<evidence type="ECO:0000255" key="1">
    <source>
        <dbReference type="HAMAP-Rule" id="MF_00444"/>
    </source>
</evidence>
<sequence>MPIGVPKVPFRSPGEEDAYWVDIYNRLYRERLLFLGQPVASEISNQLIGLMVYLSIEDDTKDLYLFMNSPGGWVLPGIAIYDTMQFVRPDVHTICMGLAASMGSFILAGGEITKRLAFPHARVMIHQPASSFYEAQTGEFVLEAEELLKLRETITRVYVQKTGKPFWVVSEDLERDVFMSATEAQAYGIVDLVAVE</sequence>
<feature type="chain" id="PRO_0000179751" description="ATP-dependent Clp protease proteolytic subunit">
    <location>
        <begin position="1"/>
        <end position="196"/>
    </location>
</feature>
<feature type="active site" description="Nucleophile" evidence="1">
    <location>
        <position position="101"/>
    </location>
</feature>
<feature type="active site" evidence="1">
    <location>
        <position position="126"/>
    </location>
</feature>
<gene>
    <name evidence="1" type="primary">clpP</name>
    <name type="ORF">PSC0719</name>
</gene>
<keyword id="KW-0150">Chloroplast</keyword>
<keyword id="KW-0378">Hydrolase</keyword>
<keyword id="KW-0934">Plastid</keyword>
<keyword id="KW-0645">Protease</keyword>
<keyword id="KW-0720">Serine protease</keyword>
<comment type="function">
    <text evidence="1">Cleaves peptides in various proteins in a process that requires ATP hydrolysis. Has a chymotrypsin-like activity. Plays a major role in the degradation of misfolded proteins.</text>
</comment>
<comment type="catalytic activity">
    <reaction evidence="1">
        <text>Hydrolysis of proteins to small peptides in the presence of ATP and magnesium. alpha-casein is the usual test substrate. In the absence of ATP, only oligopeptides shorter than five residues are hydrolyzed (such as succinyl-Leu-Tyr-|-NHMec, and Leu-Tyr-Leu-|-Tyr-Trp, in which cleavage of the -Tyr-|-Leu- and -Tyr-|-Trp bonds also occurs).</text>
        <dbReference type="EC" id="3.4.21.92"/>
    </reaction>
</comment>
<comment type="subunit">
    <text>Component of the chloroplastic Clp protease core complex.</text>
</comment>
<comment type="subcellular location">
    <subcellularLocation>
        <location evidence="1">Plastid</location>
        <location evidence="1">Chloroplast stroma</location>
    </subcellularLocation>
</comment>
<comment type="similarity">
    <text evidence="1">Belongs to the peptidase S14 family.</text>
</comment>
<proteinExistence type="inferred from homology"/>
<accession>Q68RY2</accession>
<dbReference type="EC" id="3.4.21.92" evidence="1"/>
<dbReference type="EMBL" id="AY582139">
    <property type="protein sequence ID" value="AAT98533.1"/>
    <property type="molecule type" value="Genomic_DNA"/>
</dbReference>
<dbReference type="RefSeq" id="YP_086990.1">
    <property type="nucleotide sequence ID" value="NC_006290.1"/>
</dbReference>
<dbReference type="SMR" id="Q68RY2"/>
<dbReference type="MEROPS" id="S14.002"/>
<dbReference type="GeneID" id="3021466"/>
<dbReference type="GO" id="GO:0009570">
    <property type="term" value="C:chloroplast stroma"/>
    <property type="evidence" value="ECO:0007669"/>
    <property type="project" value="UniProtKB-SubCell"/>
</dbReference>
<dbReference type="GO" id="GO:0009368">
    <property type="term" value="C:endopeptidase Clp complex"/>
    <property type="evidence" value="ECO:0007669"/>
    <property type="project" value="TreeGrafter"/>
</dbReference>
<dbReference type="GO" id="GO:0004176">
    <property type="term" value="F:ATP-dependent peptidase activity"/>
    <property type="evidence" value="ECO:0007669"/>
    <property type="project" value="InterPro"/>
</dbReference>
<dbReference type="GO" id="GO:0051117">
    <property type="term" value="F:ATPase binding"/>
    <property type="evidence" value="ECO:0007669"/>
    <property type="project" value="TreeGrafter"/>
</dbReference>
<dbReference type="GO" id="GO:0004252">
    <property type="term" value="F:serine-type endopeptidase activity"/>
    <property type="evidence" value="ECO:0007669"/>
    <property type="project" value="UniProtKB-UniRule"/>
</dbReference>
<dbReference type="GO" id="GO:0006515">
    <property type="term" value="P:protein quality control for misfolded or incompletely synthesized proteins"/>
    <property type="evidence" value="ECO:0007669"/>
    <property type="project" value="TreeGrafter"/>
</dbReference>
<dbReference type="CDD" id="cd07017">
    <property type="entry name" value="S14_ClpP_2"/>
    <property type="match status" value="1"/>
</dbReference>
<dbReference type="FunFam" id="3.90.226.10:FF:000006">
    <property type="entry name" value="ATP-dependent Clp protease proteolytic subunit"/>
    <property type="match status" value="1"/>
</dbReference>
<dbReference type="Gene3D" id="3.90.226.10">
    <property type="entry name" value="2-enoyl-CoA Hydratase, Chain A, domain 1"/>
    <property type="match status" value="1"/>
</dbReference>
<dbReference type="HAMAP" id="MF_00444">
    <property type="entry name" value="ClpP"/>
    <property type="match status" value="1"/>
</dbReference>
<dbReference type="InterPro" id="IPR001907">
    <property type="entry name" value="ClpP"/>
</dbReference>
<dbReference type="InterPro" id="IPR029045">
    <property type="entry name" value="ClpP/crotonase-like_dom_sf"/>
</dbReference>
<dbReference type="InterPro" id="IPR023562">
    <property type="entry name" value="ClpP/TepA"/>
</dbReference>
<dbReference type="InterPro" id="IPR033135">
    <property type="entry name" value="ClpP_His_AS"/>
</dbReference>
<dbReference type="InterPro" id="IPR018215">
    <property type="entry name" value="ClpP_Ser_AS"/>
</dbReference>
<dbReference type="PANTHER" id="PTHR10381">
    <property type="entry name" value="ATP-DEPENDENT CLP PROTEASE PROTEOLYTIC SUBUNIT"/>
    <property type="match status" value="1"/>
</dbReference>
<dbReference type="PANTHER" id="PTHR10381:SF15">
    <property type="entry name" value="CHLOROPLASTIC ATP-DEPENDENT CLP PROTEASE PROTEOLYTIC SUBUNIT 1"/>
    <property type="match status" value="1"/>
</dbReference>
<dbReference type="Pfam" id="PF00574">
    <property type="entry name" value="CLP_protease"/>
    <property type="match status" value="1"/>
</dbReference>
<dbReference type="PRINTS" id="PR00127">
    <property type="entry name" value="CLPPROTEASEP"/>
</dbReference>
<dbReference type="SUPFAM" id="SSF52096">
    <property type="entry name" value="ClpP/crotonase"/>
    <property type="match status" value="1"/>
</dbReference>
<dbReference type="PROSITE" id="PS00382">
    <property type="entry name" value="CLP_PROTEASE_HIS"/>
    <property type="match status" value="1"/>
</dbReference>
<dbReference type="PROSITE" id="PS00381">
    <property type="entry name" value="CLP_PROTEASE_SER"/>
    <property type="match status" value="1"/>
</dbReference>
<name>CLPP_PANGI</name>
<reference key="1">
    <citation type="journal article" date="2004" name="DNA Res.">
        <title>Complete chloroplast genome sequence from Korea ginseng (Panax schinseng Nees) and comparative analysis of sequence evolution among 17 vascular plants.</title>
        <authorList>
            <person name="Kim K.-J."/>
            <person name="Lee H.-L."/>
        </authorList>
    </citation>
    <scope>NUCLEOTIDE SEQUENCE [LARGE SCALE GENOMIC DNA]</scope>
</reference>